<proteinExistence type="evidence at transcript level"/>
<organism>
    <name type="scientific">Arabidopsis thaliana</name>
    <name type="common">Mouse-ear cress</name>
    <dbReference type="NCBI Taxonomy" id="3702"/>
    <lineage>
        <taxon>Eukaryota</taxon>
        <taxon>Viridiplantae</taxon>
        <taxon>Streptophyta</taxon>
        <taxon>Embryophyta</taxon>
        <taxon>Tracheophyta</taxon>
        <taxon>Spermatophyta</taxon>
        <taxon>Magnoliopsida</taxon>
        <taxon>eudicotyledons</taxon>
        <taxon>Gunneridae</taxon>
        <taxon>Pentapetalae</taxon>
        <taxon>rosids</taxon>
        <taxon>malvids</taxon>
        <taxon>Brassicales</taxon>
        <taxon>Brassicaceae</taxon>
        <taxon>Camelineae</taxon>
        <taxon>Arabidopsis</taxon>
    </lineage>
</organism>
<feature type="chain" id="PRO_0000423932" description="Probable 2-oxoglutarate-dependent dioxygenase AOP1">
    <location>
        <begin position="1" status="less than"/>
        <end position="301" status="greater than"/>
    </location>
</feature>
<feature type="domain" description="Fe2OG dioxygenase" evidence="2">
    <location>
        <begin position="158"/>
        <end position="262"/>
    </location>
</feature>
<feature type="binding site" evidence="2">
    <location>
        <position position="186"/>
    </location>
    <ligand>
        <name>Fe cation</name>
        <dbReference type="ChEBI" id="CHEBI:24875"/>
    </ligand>
</feature>
<feature type="binding site" evidence="2">
    <location>
        <position position="188"/>
    </location>
    <ligand>
        <name>Fe cation</name>
        <dbReference type="ChEBI" id="CHEBI:24875"/>
    </ligand>
</feature>
<feature type="binding site" evidence="2">
    <location>
        <position position="243"/>
    </location>
    <ligand>
        <name>Fe cation</name>
        <dbReference type="ChEBI" id="CHEBI:24875"/>
    </ligand>
</feature>
<feature type="binding site" evidence="2">
    <location>
        <position position="253"/>
    </location>
    <ligand>
        <name>2-oxoglutarate</name>
        <dbReference type="ChEBI" id="CHEBI:16810"/>
    </ligand>
</feature>
<feature type="non-terminal residue">
    <location>
        <position position="1"/>
    </location>
</feature>
<feature type="non-terminal residue">
    <location>
        <position position="301"/>
    </location>
</feature>
<sequence>PSVSFQLPVIDFSDQNLKPGSSKWDEVTADVLKALEDYGCFEASFDKLSVELNRSVFEAMEDLFELPIPTKQRNVSSKLFHGYLCHNLYESLGINDANVLEKVNDFTQQLWPDHGNKSISETIHLFSEQLVELDLMVRRMIMESFGIEKYIDEHLNSTYYLTRLMKYTSPPDDDDDEETKLGLRSHTDKNIITILHQYQVDGLEVKTKDDKWIKVKPSQDSVLVMVGDSLCALLNGRLHSPYHRVIMTGKKTRYSTGLFSIPKTGVIIDSPEELVDKEHPRIFKPFEYTDFLHFFQTEAGR</sequence>
<comment type="function">
    <text evidence="1">Probable 2-oxoglutarate-dependent dioxygenase that may be involved in glucosinolates biosynthesis. May play a role in the production of aliphatic glucosinolates (By similarity).</text>
</comment>
<comment type="cofactor">
    <cofactor evidence="2">
        <name>Fe(2+)</name>
        <dbReference type="ChEBI" id="CHEBI:29033"/>
    </cofactor>
    <text evidence="2">Binds 1 Fe(2+) ion per subunit.</text>
</comment>
<comment type="similarity">
    <text evidence="3">Belongs to the iron/ascorbate-dependent oxidoreductase family.</text>
</comment>
<comment type="caution">
    <text evidence="4">AOP1, AOP2 and AOP3 are found in tandem and inverted duplications on chromosome IV and encode 2-oxoglutarate-dependent dioxygenases involved in glucosinolates biosynthesis. In cv. Columbia, AOP2 (AC Q9ZTA2) cDNA contains a 5-bp deletion that leads to a non-functional protein and AOP3 (AC Q9ZTA1) is not expressed. The functional and expressed alleles for AOP2 (AC Q945B5) and AOP3 (AC Q945B4) are found in cv. Cvi and cv. Landsberg erecta, respectively. No ecotype coexpresses both AOP2 and AOP3 genes. The catalytic role of AOP1 is still uncertain (PubMed:11251105).</text>
</comment>
<accession>Q944Z5</accession>
<dbReference type="EC" id="1.14.11.-"/>
<dbReference type="EMBL" id="AF418247">
    <property type="protein sequence ID" value="AAL14682.1"/>
    <property type="molecule type" value="mRNA"/>
</dbReference>
<dbReference type="SMR" id="Q944Z5"/>
<dbReference type="ExpressionAtlas" id="Q944Z5">
    <property type="expression patterns" value="baseline and differential"/>
</dbReference>
<dbReference type="GO" id="GO:0051213">
    <property type="term" value="F:dioxygenase activity"/>
    <property type="evidence" value="ECO:0007669"/>
    <property type="project" value="UniProtKB-KW"/>
</dbReference>
<dbReference type="GO" id="GO:0046872">
    <property type="term" value="F:metal ion binding"/>
    <property type="evidence" value="ECO:0007669"/>
    <property type="project" value="UniProtKB-KW"/>
</dbReference>
<dbReference type="FunFam" id="2.60.120.330:FF:000022">
    <property type="entry name" value="Probable 2-oxoglutarate-dependent dioxygenase AOP1.2"/>
    <property type="match status" value="1"/>
</dbReference>
<dbReference type="Gene3D" id="2.60.120.330">
    <property type="entry name" value="B-lactam Antibiotic, Isopenicillin N Synthase, Chain"/>
    <property type="match status" value="1"/>
</dbReference>
<dbReference type="InterPro" id="IPR026992">
    <property type="entry name" value="DIOX_N"/>
</dbReference>
<dbReference type="InterPro" id="IPR044861">
    <property type="entry name" value="IPNS-like_FE2OG_OXY"/>
</dbReference>
<dbReference type="InterPro" id="IPR027443">
    <property type="entry name" value="IPNS-like_sf"/>
</dbReference>
<dbReference type="InterPro" id="IPR050231">
    <property type="entry name" value="Iron_ascorbate_oxido_reductase"/>
</dbReference>
<dbReference type="InterPro" id="IPR005123">
    <property type="entry name" value="Oxoglu/Fe-dep_dioxygenase_dom"/>
</dbReference>
<dbReference type="PANTHER" id="PTHR47990">
    <property type="entry name" value="2-OXOGLUTARATE (2OG) AND FE(II)-DEPENDENT OXYGENASE SUPERFAMILY PROTEIN-RELATED"/>
    <property type="match status" value="1"/>
</dbReference>
<dbReference type="Pfam" id="PF03171">
    <property type="entry name" value="2OG-FeII_Oxy"/>
    <property type="match status" value="1"/>
</dbReference>
<dbReference type="Pfam" id="PF14226">
    <property type="entry name" value="DIOX_N"/>
    <property type="match status" value="1"/>
</dbReference>
<dbReference type="SUPFAM" id="SSF51197">
    <property type="entry name" value="Clavaminate synthase-like"/>
    <property type="match status" value="1"/>
</dbReference>
<dbReference type="PROSITE" id="PS51471">
    <property type="entry name" value="FE2OG_OXY"/>
    <property type="match status" value="1"/>
</dbReference>
<name>AOP1V_ARATH</name>
<evidence type="ECO:0000250" key="1"/>
<evidence type="ECO:0000255" key="2">
    <source>
        <dbReference type="PROSITE-ProRule" id="PRU00805"/>
    </source>
</evidence>
<evidence type="ECO:0000305" key="3"/>
<evidence type="ECO:0000305" key="4">
    <source>
    </source>
</evidence>
<reference key="1">
    <citation type="journal article" date="2001" name="Plant Cell">
        <title>Gene duplication in the diversification of secondary metabolism: tandem 2-oxoglutarate-dependent dioxygenases control glucosinolate biosynthesis in Arabidopsis.</title>
        <authorList>
            <person name="Kliebenstein D.J."/>
            <person name="Lambrix V.M."/>
            <person name="Reichelt M."/>
            <person name="Gershenzon J."/>
            <person name="Mitchell-Olds T."/>
        </authorList>
    </citation>
    <scope>NUCLEOTIDE SEQUENCE [MRNA]</scope>
    <scope>GENE FAMILY</scope>
    <source>
        <strain>cv. Cvi-0</strain>
    </source>
</reference>
<keyword id="KW-0223">Dioxygenase</keyword>
<keyword id="KW-0408">Iron</keyword>
<keyword id="KW-0479">Metal-binding</keyword>
<keyword id="KW-0560">Oxidoreductase</keyword>
<gene>
    <name type="primary">AOP1</name>
</gene>
<protein>
    <recommendedName>
        <fullName>Probable 2-oxoglutarate-dependent dioxygenase AOP1</fullName>
        <ecNumber>1.14.11.-</ecNumber>
    </recommendedName>
</protein>